<feature type="chain" id="PRO_0000174488" description="S-adenosylmethionine synthase">
    <location>
        <begin position="1"/>
        <end position="399"/>
    </location>
</feature>
<feature type="region of interest" description="Flexible loop" evidence="1">
    <location>
        <begin position="103"/>
        <end position="113"/>
    </location>
</feature>
<feature type="binding site" description="in other chain" evidence="1">
    <location>
        <position position="19"/>
    </location>
    <ligand>
        <name>ATP</name>
        <dbReference type="ChEBI" id="CHEBI:30616"/>
        <note>ligand shared between two neighboring subunits</note>
    </ligand>
</feature>
<feature type="binding site" evidence="1">
    <location>
        <position position="21"/>
    </location>
    <ligand>
        <name>Mg(2+)</name>
        <dbReference type="ChEBI" id="CHEBI:18420"/>
    </ligand>
</feature>
<feature type="binding site" evidence="1">
    <location>
        <position position="47"/>
    </location>
    <ligand>
        <name>K(+)</name>
        <dbReference type="ChEBI" id="CHEBI:29103"/>
    </ligand>
</feature>
<feature type="binding site" description="in other chain" evidence="1">
    <location>
        <position position="60"/>
    </location>
    <ligand>
        <name>L-methionine</name>
        <dbReference type="ChEBI" id="CHEBI:57844"/>
        <note>ligand shared between two neighboring subunits</note>
    </ligand>
</feature>
<feature type="binding site" description="in other chain" evidence="1">
    <location>
        <position position="103"/>
    </location>
    <ligand>
        <name>L-methionine</name>
        <dbReference type="ChEBI" id="CHEBI:57844"/>
        <note>ligand shared between two neighboring subunits</note>
    </ligand>
</feature>
<feature type="binding site" description="in other chain" evidence="1">
    <location>
        <begin position="179"/>
        <end position="181"/>
    </location>
    <ligand>
        <name>ATP</name>
        <dbReference type="ChEBI" id="CHEBI:30616"/>
        <note>ligand shared between two neighboring subunits</note>
    </ligand>
</feature>
<feature type="binding site" description="in other chain" evidence="1">
    <location>
        <begin position="246"/>
        <end position="247"/>
    </location>
    <ligand>
        <name>ATP</name>
        <dbReference type="ChEBI" id="CHEBI:30616"/>
        <note>ligand shared between two neighboring subunits</note>
    </ligand>
</feature>
<feature type="binding site" evidence="1">
    <location>
        <position position="255"/>
    </location>
    <ligand>
        <name>ATP</name>
        <dbReference type="ChEBI" id="CHEBI:30616"/>
        <note>ligand shared between two neighboring subunits</note>
    </ligand>
</feature>
<feature type="binding site" evidence="1">
    <location>
        <position position="255"/>
    </location>
    <ligand>
        <name>L-methionine</name>
        <dbReference type="ChEBI" id="CHEBI:57844"/>
        <note>ligand shared between two neighboring subunits</note>
    </ligand>
</feature>
<feature type="binding site" description="in other chain" evidence="1">
    <location>
        <begin position="261"/>
        <end position="262"/>
    </location>
    <ligand>
        <name>ATP</name>
        <dbReference type="ChEBI" id="CHEBI:30616"/>
        <note>ligand shared between two neighboring subunits</note>
    </ligand>
</feature>
<feature type="binding site" evidence="1">
    <location>
        <position position="278"/>
    </location>
    <ligand>
        <name>ATP</name>
        <dbReference type="ChEBI" id="CHEBI:30616"/>
        <note>ligand shared between two neighboring subunits</note>
    </ligand>
</feature>
<feature type="binding site" evidence="1">
    <location>
        <position position="282"/>
    </location>
    <ligand>
        <name>ATP</name>
        <dbReference type="ChEBI" id="CHEBI:30616"/>
        <note>ligand shared between two neighboring subunits</note>
    </ligand>
</feature>
<feature type="binding site" description="in other chain" evidence="1">
    <location>
        <position position="286"/>
    </location>
    <ligand>
        <name>L-methionine</name>
        <dbReference type="ChEBI" id="CHEBI:57844"/>
        <note>ligand shared between two neighboring subunits</note>
    </ligand>
</feature>
<protein>
    <recommendedName>
        <fullName evidence="1">S-adenosylmethionine synthase</fullName>
        <shortName evidence="1">AdoMet synthase</shortName>
        <ecNumber evidence="1">2.5.1.6</ecNumber>
    </recommendedName>
    <alternativeName>
        <fullName evidence="1">MAT</fullName>
    </alternativeName>
    <alternativeName>
        <fullName evidence="1">Methionine adenosyltransferase</fullName>
    </alternativeName>
</protein>
<organism>
    <name type="scientific">Halalkalibacterium halodurans (strain ATCC BAA-125 / DSM 18197 / FERM 7344 / JCM 9153 / C-125)</name>
    <name type="common">Bacillus halodurans</name>
    <dbReference type="NCBI Taxonomy" id="272558"/>
    <lineage>
        <taxon>Bacteria</taxon>
        <taxon>Bacillati</taxon>
        <taxon>Bacillota</taxon>
        <taxon>Bacilli</taxon>
        <taxon>Bacillales</taxon>
        <taxon>Bacillaceae</taxon>
        <taxon>Halalkalibacterium (ex Joshi et al. 2022)</taxon>
    </lineage>
</organism>
<accession>Q9K7Q9</accession>
<name>METK_HALH5</name>
<reference key="1">
    <citation type="journal article" date="2000" name="Nucleic Acids Res.">
        <title>Complete genome sequence of the alkaliphilic bacterium Bacillus halodurans and genomic sequence comparison with Bacillus subtilis.</title>
        <authorList>
            <person name="Takami H."/>
            <person name="Nakasone K."/>
            <person name="Takaki Y."/>
            <person name="Maeno G."/>
            <person name="Sasaki R."/>
            <person name="Masui N."/>
            <person name="Fuji F."/>
            <person name="Hirama C."/>
            <person name="Nakamura Y."/>
            <person name="Ogasawara N."/>
            <person name="Kuhara S."/>
            <person name="Horikoshi K."/>
        </authorList>
    </citation>
    <scope>NUCLEOTIDE SEQUENCE [LARGE SCALE GENOMIC DNA]</scope>
    <source>
        <strain>ATCC BAA-125 / DSM 18197 / FERM 7344 / JCM 9153 / C-125</strain>
    </source>
</reference>
<sequence length="399" mass="43795">MADTRSRRLFTSESVTEGHPDKICDQISDSILDEILKEDPNARVACETSVTTGLVLVAGEITTSTYVDIPKVVRDTIRNIGYTRAKYGFDSETCAVLTSIDEQSPDIAQGVNQALEAREGQMTDAEIEAIGAGDQGLMFGYANNETPELMPLPISLSHKLARRLSEARKGEILPYLRPDGKTQVTVEYDENDQSVRIDTIVISTQHHPEVTLEQIESDLKQHVIRSVVPEELIDEETKYFINPTGRFVIGGPQGDAGLTGRKIIVDTYGGYARHGGGAFSGKDPTKVDRSGAYAARYVAKNIVAAGLADKCEVQLAYAIGVAKPVSISIDTFGTGQVSEARLVELVREHFDLRPAGIIKMLDLRRPIYKQTAAYGHFGRTDVELPWEQTDKAEILRQQA</sequence>
<evidence type="ECO:0000255" key="1">
    <source>
        <dbReference type="HAMAP-Rule" id="MF_00086"/>
    </source>
</evidence>
<gene>
    <name evidence="1" type="primary">metK</name>
    <name type="ordered locus">BH3300</name>
</gene>
<comment type="function">
    <text evidence="1">Catalyzes the formation of S-adenosylmethionine (AdoMet) from methionine and ATP. The overall synthetic reaction is composed of two sequential steps, AdoMet formation and the subsequent tripolyphosphate hydrolysis which occurs prior to release of AdoMet from the enzyme.</text>
</comment>
<comment type="catalytic activity">
    <reaction evidence="1">
        <text>L-methionine + ATP + H2O = S-adenosyl-L-methionine + phosphate + diphosphate</text>
        <dbReference type="Rhea" id="RHEA:21080"/>
        <dbReference type="ChEBI" id="CHEBI:15377"/>
        <dbReference type="ChEBI" id="CHEBI:30616"/>
        <dbReference type="ChEBI" id="CHEBI:33019"/>
        <dbReference type="ChEBI" id="CHEBI:43474"/>
        <dbReference type="ChEBI" id="CHEBI:57844"/>
        <dbReference type="ChEBI" id="CHEBI:59789"/>
        <dbReference type="EC" id="2.5.1.6"/>
    </reaction>
</comment>
<comment type="cofactor">
    <cofactor evidence="1">
        <name>Mg(2+)</name>
        <dbReference type="ChEBI" id="CHEBI:18420"/>
    </cofactor>
    <text evidence="1">Binds 2 divalent ions per subunit.</text>
</comment>
<comment type="cofactor">
    <cofactor evidence="1">
        <name>K(+)</name>
        <dbReference type="ChEBI" id="CHEBI:29103"/>
    </cofactor>
    <text evidence="1">Binds 1 potassium ion per subunit.</text>
</comment>
<comment type="pathway">
    <text evidence="1">Amino-acid biosynthesis; S-adenosyl-L-methionine biosynthesis; S-adenosyl-L-methionine from L-methionine: step 1/1.</text>
</comment>
<comment type="subunit">
    <text evidence="1">Homotetramer; dimer of dimers.</text>
</comment>
<comment type="subcellular location">
    <subcellularLocation>
        <location evidence="1">Cytoplasm</location>
    </subcellularLocation>
</comment>
<comment type="similarity">
    <text evidence="1">Belongs to the AdoMet synthase family.</text>
</comment>
<proteinExistence type="inferred from homology"/>
<dbReference type="EC" id="2.5.1.6" evidence="1"/>
<dbReference type="EMBL" id="BA000004">
    <property type="protein sequence ID" value="BAB07019.1"/>
    <property type="molecule type" value="Genomic_DNA"/>
</dbReference>
<dbReference type="PIR" id="D84062">
    <property type="entry name" value="D84062"/>
</dbReference>
<dbReference type="RefSeq" id="WP_010899441.1">
    <property type="nucleotide sequence ID" value="NC_002570.2"/>
</dbReference>
<dbReference type="SMR" id="Q9K7Q9"/>
<dbReference type="STRING" id="272558.gene:10729212"/>
<dbReference type="KEGG" id="bha:BH3300"/>
<dbReference type="eggNOG" id="COG0192">
    <property type="taxonomic scope" value="Bacteria"/>
</dbReference>
<dbReference type="HOGENOM" id="CLU_041802_1_1_9"/>
<dbReference type="OrthoDB" id="9801686at2"/>
<dbReference type="UniPathway" id="UPA00315">
    <property type="reaction ID" value="UER00080"/>
</dbReference>
<dbReference type="Proteomes" id="UP000001258">
    <property type="component" value="Chromosome"/>
</dbReference>
<dbReference type="GO" id="GO:0005737">
    <property type="term" value="C:cytoplasm"/>
    <property type="evidence" value="ECO:0007669"/>
    <property type="project" value="UniProtKB-SubCell"/>
</dbReference>
<dbReference type="GO" id="GO:0005524">
    <property type="term" value="F:ATP binding"/>
    <property type="evidence" value="ECO:0007669"/>
    <property type="project" value="UniProtKB-UniRule"/>
</dbReference>
<dbReference type="GO" id="GO:0000287">
    <property type="term" value="F:magnesium ion binding"/>
    <property type="evidence" value="ECO:0007669"/>
    <property type="project" value="UniProtKB-UniRule"/>
</dbReference>
<dbReference type="GO" id="GO:0004478">
    <property type="term" value="F:methionine adenosyltransferase activity"/>
    <property type="evidence" value="ECO:0007669"/>
    <property type="project" value="UniProtKB-UniRule"/>
</dbReference>
<dbReference type="GO" id="GO:0006730">
    <property type="term" value="P:one-carbon metabolic process"/>
    <property type="evidence" value="ECO:0007669"/>
    <property type="project" value="UniProtKB-KW"/>
</dbReference>
<dbReference type="GO" id="GO:0006556">
    <property type="term" value="P:S-adenosylmethionine biosynthetic process"/>
    <property type="evidence" value="ECO:0007669"/>
    <property type="project" value="UniProtKB-UniRule"/>
</dbReference>
<dbReference type="CDD" id="cd18079">
    <property type="entry name" value="S-AdoMet_synt"/>
    <property type="match status" value="1"/>
</dbReference>
<dbReference type="FunFam" id="3.30.300.10:FF:000003">
    <property type="entry name" value="S-adenosylmethionine synthase"/>
    <property type="match status" value="1"/>
</dbReference>
<dbReference type="FunFam" id="3.30.300.10:FF:000004">
    <property type="entry name" value="S-adenosylmethionine synthase"/>
    <property type="match status" value="1"/>
</dbReference>
<dbReference type="Gene3D" id="3.30.300.10">
    <property type="match status" value="3"/>
</dbReference>
<dbReference type="HAMAP" id="MF_00086">
    <property type="entry name" value="S_AdoMet_synth1"/>
    <property type="match status" value="1"/>
</dbReference>
<dbReference type="InterPro" id="IPR022631">
    <property type="entry name" value="ADOMET_SYNTHASE_CS"/>
</dbReference>
<dbReference type="InterPro" id="IPR022630">
    <property type="entry name" value="S-AdoMet_synt_C"/>
</dbReference>
<dbReference type="InterPro" id="IPR022629">
    <property type="entry name" value="S-AdoMet_synt_central"/>
</dbReference>
<dbReference type="InterPro" id="IPR022628">
    <property type="entry name" value="S-AdoMet_synt_N"/>
</dbReference>
<dbReference type="InterPro" id="IPR002133">
    <property type="entry name" value="S-AdoMet_synthetase"/>
</dbReference>
<dbReference type="InterPro" id="IPR022636">
    <property type="entry name" value="S-AdoMet_synthetase_sfam"/>
</dbReference>
<dbReference type="NCBIfam" id="TIGR01034">
    <property type="entry name" value="metK"/>
    <property type="match status" value="1"/>
</dbReference>
<dbReference type="PANTHER" id="PTHR11964">
    <property type="entry name" value="S-ADENOSYLMETHIONINE SYNTHETASE"/>
    <property type="match status" value="1"/>
</dbReference>
<dbReference type="Pfam" id="PF02773">
    <property type="entry name" value="S-AdoMet_synt_C"/>
    <property type="match status" value="1"/>
</dbReference>
<dbReference type="Pfam" id="PF02772">
    <property type="entry name" value="S-AdoMet_synt_M"/>
    <property type="match status" value="1"/>
</dbReference>
<dbReference type="Pfam" id="PF00438">
    <property type="entry name" value="S-AdoMet_synt_N"/>
    <property type="match status" value="1"/>
</dbReference>
<dbReference type="PIRSF" id="PIRSF000497">
    <property type="entry name" value="MAT"/>
    <property type="match status" value="1"/>
</dbReference>
<dbReference type="SUPFAM" id="SSF55973">
    <property type="entry name" value="S-adenosylmethionine synthetase"/>
    <property type="match status" value="3"/>
</dbReference>
<dbReference type="PROSITE" id="PS00376">
    <property type="entry name" value="ADOMET_SYNTHASE_1"/>
    <property type="match status" value="1"/>
</dbReference>
<dbReference type="PROSITE" id="PS00377">
    <property type="entry name" value="ADOMET_SYNTHASE_2"/>
    <property type="match status" value="1"/>
</dbReference>
<keyword id="KW-0067">ATP-binding</keyword>
<keyword id="KW-0963">Cytoplasm</keyword>
<keyword id="KW-0460">Magnesium</keyword>
<keyword id="KW-0479">Metal-binding</keyword>
<keyword id="KW-0547">Nucleotide-binding</keyword>
<keyword id="KW-0554">One-carbon metabolism</keyword>
<keyword id="KW-0630">Potassium</keyword>
<keyword id="KW-1185">Reference proteome</keyword>
<keyword id="KW-0808">Transferase</keyword>